<accession>Q9W0E3</accession>
<accession>E8NH72</accession>
<accession>Q8IRG9</accession>
<accession>Q8SY36</accession>
<proteinExistence type="evidence at protein level"/>
<dbReference type="EMBL" id="AE014296">
    <property type="protein sequence ID" value="AAF47505.2"/>
    <property type="molecule type" value="Genomic_DNA"/>
</dbReference>
<dbReference type="EMBL" id="AE014296">
    <property type="protein sequence ID" value="AAN11485.1"/>
    <property type="molecule type" value="Genomic_DNA"/>
</dbReference>
<dbReference type="EMBL" id="AY075414">
    <property type="protein sequence ID" value="AAL68237.1"/>
    <property type="status" value="ALT_INIT"/>
    <property type="molecule type" value="mRNA"/>
</dbReference>
<dbReference type="EMBL" id="BT125948">
    <property type="protein sequence ID" value="ADX35927.1"/>
    <property type="molecule type" value="mRNA"/>
</dbReference>
<dbReference type="RefSeq" id="NP_647618.1">
    <molecule id="Q9W0E3-2"/>
    <property type="nucleotide sequence ID" value="NM_139361.2"/>
</dbReference>
<dbReference type="RefSeq" id="NP_728621.1">
    <molecule id="Q9W0E3-1"/>
    <property type="nucleotide sequence ID" value="NM_167889.2"/>
</dbReference>
<dbReference type="SMR" id="Q9W0E3"/>
<dbReference type="ComplexPortal" id="CPX-2781">
    <property type="entry name" value="GATOR1 complex"/>
</dbReference>
<dbReference type="FunCoup" id="Q9W0E3">
    <property type="interactions" value="921"/>
</dbReference>
<dbReference type="IntAct" id="Q9W0E3">
    <property type="interactions" value="9"/>
</dbReference>
<dbReference type="STRING" id="7227.FBpp0072587"/>
<dbReference type="PaxDb" id="7227-FBpp0072587"/>
<dbReference type="EnsemblMetazoa" id="FBtr0072703">
    <molecule id="Q9W0E3-1"/>
    <property type="protein sequence ID" value="FBpp0072587"/>
    <property type="gene ID" value="FBgn0035227"/>
</dbReference>
<dbReference type="EnsemblMetazoa" id="FBtr0072704">
    <molecule id="Q9W0E3-2"/>
    <property type="protein sequence ID" value="FBpp0072588"/>
    <property type="gene ID" value="FBgn0035227"/>
</dbReference>
<dbReference type="GeneID" id="38176"/>
<dbReference type="KEGG" id="dme:Dmel_CG12090"/>
<dbReference type="UCSC" id="CG12090-RA">
    <molecule id="Q9W0E3-1"/>
    <property type="organism name" value="d. melanogaster"/>
</dbReference>
<dbReference type="UCSC" id="CG12090-RB">
    <property type="organism name" value="d. melanogaster"/>
</dbReference>
<dbReference type="AGR" id="FB:FBgn0035227"/>
<dbReference type="CTD" id="38176"/>
<dbReference type="FlyBase" id="FBgn0035227">
    <property type="gene designation" value="Iml1"/>
</dbReference>
<dbReference type="VEuPathDB" id="VectorBase:FBgn0035227"/>
<dbReference type="eggNOG" id="KOG3572">
    <property type="taxonomic scope" value="Eukaryota"/>
</dbReference>
<dbReference type="GeneTree" id="ENSGT00390000016559"/>
<dbReference type="InParanoid" id="Q9W0E3"/>
<dbReference type="OMA" id="SWMNATP"/>
<dbReference type="OrthoDB" id="39497at2759"/>
<dbReference type="PhylomeDB" id="Q9W0E3"/>
<dbReference type="BioGRID-ORCS" id="38176">
    <property type="hits" value="0 hits in 1 CRISPR screen"/>
</dbReference>
<dbReference type="GenomeRNAi" id="38176"/>
<dbReference type="PRO" id="PR:Q9W0E3"/>
<dbReference type="Proteomes" id="UP000000803">
    <property type="component" value="Chromosome 3L"/>
</dbReference>
<dbReference type="Bgee" id="FBgn0035227">
    <property type="expression patterns" value="Expressed in compound eye cone cell in insect head and 187 other cell types or tissues"/>
</dbReference>
<dbReference type="ExpressionAtlas" id="Q9W0E3">
    <property type="expression patterns" value="baseline and differential"/>
</dbReference>
<dbReference type="GO" id="GO:1990130">
    <property type="term" value="C:GATOR1 complex"/>
    <property type="evidence" value="ECO:0000318"/>
    <property type="project" value="GO_Central"/>
</dbReference>
<dbReference type="GO" id="GO:0005765">
    <property type="term" value="C:lysosomal membrane"/>
    <property type="evidence" value="ECO:0000318"/>
    <property type="project" value="GO_Central"/>
</dbReference>
<dbReference type="GO" id="GO:0005764">
    <property type="term" value="C:lysosome"/>
    <property type="evidence" value="ECO:0000314"/>
    <property type="project" value="UniProtKB"/>
</dbReference>
<dbReference type="GO" id="GO:0035859">
    <property type="term" value="C:Seh1-associated complex"/>
    <property type="evidence" value="ECO:0000314"/>
    <property type="project" value="FlyBase"/>
</dbReference>
<dbReference type="GO" id="GO:0005096">
    <property type="term" value="F:GTPase activator activity"/>
    <property type="evidence" value="ECO:0000250"/>
    <property type="project" value="FlyBase"/>
</dbReference>
<dbReference type="GO" id="GO:0034198">
    <property type="term" value="P:cellular response to amino acid starvation"/>
    <property type="evidence" value="ECO:0000315"/>
    <property type="project" value="UniProtKB"/>
</dbReference>
<dbReference type="GO" id="GO:0048142">
    <property type="term" value="P:germarium-derived cystoblast division"/>
    <property type="evidence" value="ECO:0000315"/>
    <property type="project" value="FlyBase"/>
</dbReference>
<dbReference type="GO" id="GO:0051729">
    <property type="term" value="P:germline cell cycle switching, mitotic to meiotic cell cycle"/>
    <property type="evidence" value="ECO:0000315"/>
    <property type="project" value="UniProtKB"/>
</dbReference>
<dbReference type="GO" id="GO:0051321">
    <property type="term" value="P:meiotic cell cycle"/>
    <property type="evidence" value="ECO:0007669"/>
    <property type="project" value="UniProtKB-KW"/>
</dbReference>
<dbReference type="GO" id="GO:0045792">
    <property type="term" value="P:negative regulation of cell size"/>
    <property type="evidence" value="ECO:0000315"/>
    <property type="project" value="UniProtKB"/>
</dbReference>
<dbReference type="GO" id="GO:0032007">
    <property type="term" value="P:negative regulation of TOR signaling"/>
    <property type="evidence" value="ECO:0000315"/>
    <property type="project" value="UniProtKB"/>
</dbReference>
<dbReference type="GO" id="GO:1904262">
    <property type="term" value="P:negative regulation of TORC1 signaling"/>
    <property type="evidence" value="ECO:0000315"/>
    <property type="project" value="FlyBase"/>
</dbReference>
<dbReference type="GO" id="GO:0010508">
    <property type="term" value="P:positive regulation of autophagy"/>
    <property type="evidence" value="ECO:0000318"/>
    <property type="project" value="GO_Central"/>
</dbReference>
<dbReference type="CDD" id="cd04449">
    <property type="entry name" value="DEP_DEPDC5-like"/>
    <property type="match status" value="1"/>
</dbReference>
<dbReference type="InterPro" id="IPR045838">
    <property type="entry name" value="DEPDC5_CTD"/>
</dbReference>
<dbReference type="InterPro" id="IPR027244">
    <property type="entry name" value="IML1"/>
</dbReference>
<dbReference type="InterPro" id="IPR055213">
    <property type="entry name" value="IML1_double_psi_beta_barrel"/>
</dbReference>
<dbReference type="InterPro" id="IPR048255">
    <property type="entry name" value="IML1_N"/>
</dbReference>
<dbReference type="PANTHER" id="PTHR13179">
    <property type="entry name" value="DEP DOMAIN CONTAINING PROTEIN 5"/>
    <property type="match status" value="1"/>
</dbReference>
<dbReference type="PANTHER" id="PTHR13179:SF8">
    <property type="entry name" value="GATOR COMPLEX PROTEIN DEPDC5"/>
    <property type="match status" value="1"/>
</dbReference>
<dbReference type="Pfam" id="PF19418">
    <property type="entry name" value="DEPDC5_CTD"/>
    <property type="match status" value="1"/>
</dbReference>
<dbReference type="Pfam" id="PF12257">
    <property type="entry name" value="IML1"/>
    <property type="match status" value="1"/>
</dbReference>
<dbReference type="Pfam" id="PF23013">
    <property type="entry name" value="IML1_N"/>
    <property type="match status" value="1"/>
</dbReference>
<reference evidence="12" key="1">
    <citation type="journal article" date="2000" name="Science">
        <title>The genome sequence of Drosophila melanogaster.</title>
        <authorList>
            <person name="Adams M.D."/>
            <person name="Celniker S.E."/>
            <person name="Holt R.A."/>
            <person name="Evans C.A."/>
            <person name="Gocayne J.D."/>
            <person name="Amanatides P.G."/>
            <person name="Scherer S.E."/>
            <person name="Li P.W."/>
            <person name="Hoskins R.A."/>
            <person name="Galle R.F."/>
            <person name="George R.A."/>
            <person name="Lewis S.E."/>
            <person name="Richards S."/>
            <person name="Ashburner M."/>
            <person name="Henderson S.N."/>
            <person name="Sutton G.G."/>
            <person name="Wortman J.R."/>
            <person name="Yandell M.D."/>
            <person name="Zhang Q."/>
            <person name="Chen L.X."/>
            <person name="Brandon R.C."/>
            <person name="Rogers Y.-H.C."/>
            <person name="Blazej R.G."/>
            <person name="Champe M."/>
            <person name="Pfeiffer B.D."/>
            <person name="Wan K.H."/>
            <person name="Doyle C."/>
            <person name="Baxter E.G."/>
            <person name="Helt G."/>
            <person name="Nelson C.R."/>
            <person name="Miklos G.L.G."/>
            <person name="Abril J.F."/>
            <person name="Agbayani A."/>
            <person name="An H.-J."/>
            <person name="Andrews-Pfannkoch C."/>
            <person name="Baldwin D."/>
            <person name="Ballew R.M."/>
            <person name="Basu A."/>
            <person name="Baxendale J."/>
            <person name="Bayraktaroglu L."/>
            <person name="Beasley E.M."/>
            <person name="Beeson K.Y."/>
            <person name="Benos P.V."/>
            <person name="Berman B.P."/>
            <person name="Bhandari D."/>
            <person name="Bolshakov S."/>
            <person name="Borkova D."/>
            <person name="Botchan M.R."/>
            <person name="Bouck J."/>
            <person name="Brokstein P."/>
            <person name="Brottier P."/>
            <person name="Burtis K.C."/>
            <person name="Busam D.A."/>
            <person name="Butler H."/>
            <person name="Cadieu E."/>
            <person name="Center A."/>
            <person name="Chandra I."/>
            <person name="Cherry J.M."/>
            <person name="Cawley S."/>
            <person name="Dahlke C."/>
            <person name="Davenport L.B."/>
            <person name="Davies P."/>
            <person name="de Pablos B."/>
            <person name="Delcher A."/>
            <person name="Deng Z."/>
            <person name="Mays A.D."/>
            <person name="Dew I."/>
            <person name="Dietz S.M."/>
            <person name="Dodson K."/>
            <person name="Doup L.E."/>
            <person name="Downes M."/>
            <person name="Dugan-Rocha S."/>
            <person name="Dunkov B.C."/>
            <person name="Dunn P."/>
            <person name="Durbin K.J."/>
            <person name="Evangelista C.C."/>
            <person name="Ferraz C."/>
            <person name="Ferriera S."/>
            <person name="Fleischmann W."/>
            <person name="Fosler C."/>
            <person name="Gabrielian A.E."/>
            <person name="Garg N.S."/>
            <person name="Gelbart W.M."/>
            <person name="Glasser K."/>
            <person name="Glodek A."/>
            <person name="Gong F."/>
            <person name="Gorrell J.H."/>
            <person name="Gu Z."/>
            <person name="Guan P."/>
            <person name="Harris M."/>
            <person name="Harris N.L."/>
            <person name="Harvey D.A."/>
            <person name="Heiman T.J."/>
            <person name="Hernandez J.R."/>
            <person name="Houck J."/>
            <person name="Hostin D."/>
            <person name="Houston K.A."/>
            <person name="Howland T.J."/>
            <person name="Wei M.-H."/>
            <person name="Ibegwam C."/>
            <person name="Jalali M."/>
            <person name="Kalush F."/>
            <person name="Karpen G.H."/>
            <person name="Ke Z."/>
            <person name="Kennison J.A."/>
            <person name="Ketchum K.A."/>
            <person name="Kimmel B.E."/>
            <person name="Kodira C.D."/>
            <person name="Kraft C.L."/>
            <person name="Kravitz S."/>
            <person name="Kulp D."/>
            <person name="Lai Z."/>
            <person name="Lasko P."/>
            <person name="Lei Y."/>
            <person name="Levitsky A.A."/>
            <person name="Li J.H."/>
            <person name="Li Z."/>
            <person name="Liang Y."/>
            <person name="Lin X."/>
            <person name="Liu X."/>
            <person name="Mattei B."/>
            <person name="McIntosh T.C."/>
            <person name="McLeod M.P."/>
            <person name="McPherson D."/>
            <person name="Merkulov G."/>
            <person name="Milshina N.V."/>
            <person name="Mobarry C."/>
            <person name="Morris J."/>
            <person name="Moshrefi A."/>
            <person name="Mount S.M."/>
            <person name="Moy M."/>
            <person name="Murphy B."/>
            <person name="Murphy L."/>
            <person name="Muzny D.M."/>
            <person name="Nelson D.L."/>
            <person name="Nelson D.R."/>
            <person name="Nelson K.A."/>
            <person name="Nixon K."/>
            <person name="Nusskern D.R."/>
            <person name="Pacleb J.M."/>
            <person name="Palazzolo M."/>
            <person name="Pittman G.S."/>
            <person name="Pan S."/>
            <person name="Pollard J."/>
            <person name="Puri V."/>
            <person name="Reese M.G."/>
            <person name="Reinert K."/>
            <person name="Remington K."/>
            <person name="Saunders R.D.C."/>
            <person name="Scheeler F."/>
            <person name="Shen H."/>
            <person name="Shue B.C."/>
            <person name="Siden-Kiamos I."/>
            <person name="Simpson M."/>
            <person name="Skupski M.P."/>
            <person name="Smith T.J."/>
            <person name="Spier E."/>
            <person name="Spradling A.C."/>
            <person name="Stapleton M."/>
            <person name="Strong R."/>
            <person name="Sun E."/>
            <person name="Svirskas R."/>
            <person name="Tector C."/>
            <person name="Turner R."/>
            <person name="Venter E."/>
            <person name="Wang A.H."/>
            <person name="Wang X."/>
            <person name="Wang Z.-Y."/>
            <person name="Wassarman D.A."/>
            <person name="Weinstock G.M."/>
            <person name="Weissenbach J."/>
            <person name="Williams S.M."/>
            <person name="Woodage T."/>
            <person name="Worley K.C."/>
            <person name="Wu D."/>
            <person name="Yang S."/>
            <person name="Yao Q.A."/>
            <person name="Ye J."/>
            <person name="Yeh R.-F."/>
            <person name="Zaveri J.S."/>
            <person name="Zhan M."/>
            <person name="Zhang G."/>
            <person name="Zhao Q."/>
            <person name="Zheng L."/>
            <person name="Zheng X.H."/>
            <person name="Zhong F.N."/>
            <person name="Zhong W."/>
            <person name="Zhou X."/>
            <person name="Zhu S.C."/>
            <person name="Zhu X."/>
            <person name="Smith H.O."/>
            <person name="Gibbs R.A."/>
            <person name="Myers E.W."/>
            <person name="Rubin G.M."/>
            <person name="Venter J.C."/>
        </authorList>
    </citation>
    <scope>NUCLEOTIDE SEQUENCE [LARGE SCALE GENOMIC DNA]</scope>
    <source>
        <strain evidence="12">Berkeley</strain>
    </source>
</reference>
<reference evidence="12" key="2">
    <citation type="journal article" date="2002" name="Genome Biol.">
        <title>Annotation of the Drosophila melanogaster euchromatic genome: a systematic review.</title>
        <authorList>
            <person name="Misra S."/>
            <person name="Crosby M.A."/>
            <person name="Mungall C.J."/>
            <person name="Matthews B.B."/>
            <person name="Campbell K.S."/>
            <person name="Hradecky P."/>
            <person name="Huang Y."/>
            <person name="Kaminker J.S."/>
            <person name="Millburn G.H."/>
            <person name="Prochnik S.E."/>
            <person name="Smith C.D."/>
            <person name="Tupy J.L."/>
            <person name="Whitfield E.J."/>
            <person name="Bayraktaroglu L."/>
            <person name="Berman B.P."/>
            <person name="Bettencourt B.R."/>
            <person name="Celniker S.E."/>
            <person name="de Grey A.D.N.J."/>
            <person name="Drysdale R.A."/>
            <person name="Harris N.L."/>
            <person name="Richter J."/>
            <person name="Russo S."/>
            <person name="Schroeder A.J."/>
            <person name="Shu S.Q."/>
            <person name="Stapleton M."/>
            <person name="Yamada C."/>
            <person name="Ashburner M."/>
            <person name="Gelbart W.M."/>
            <person name="Rubin G.M."/>
            <person name="Lewis S.E."/>
        </authorList>
    </citation>
    <scope>GENOME REANNOTATION</scope>
    <source>
        <strain evidence="12">Berkeley</strain>
    </source>
</reference>
<reference evidence="9" key="3">
    <citation type="journal article" date="2002" name="Genome Biol.">
        <title>A Drosophila full-length cDNA resource.</title>
        <authorList>
            <person name="Stapleton M."/>
            <person name="Carlson J.W."/>
            <person name="Brokstein P."/>
            <person name="Yu C."/>
            <person name="Champe M."/>
            <person name="George R.A."/>
            <person name="Guarin H."/>
            <person name="Kronmiller B."/>
            <person name="Pacleb J.M."/>
            <person name="Park S."/>
            <person name="Wan K.H."/>
            <person name="Rubin G.M."/>
            <person name="Celniker S.E."/>
        </authorList>
    </citation>
    <scope>NUCLEOTIDE SEQUENCE [LARGE SCALE MRNA] OF 255-1544 (ISOFORM B)</scope>
    <source>
        <strain evidence="9">Berkeley</strain>
        <tissue evidence="9">Embryo</tissue>
    </source>
</reference>
<reference evidence="10" key="4">
    <citation type="submission" date="2011-02" db="EMBL/GenBank/DDBJ databases">
        <authorList>
            <person name="Carlson J."/>
            <person name="Booth B."/>
            <person name="Frise E."/>
            <person name="Park S."/>
            <person name="Wan K."/>
            <person name="Yu C."/>
            <person name="Celniker S."/>
        </authorList>
    </citation>
    <scope>NUCLEOTIDE SEQUENCE [LARGE SCALE MRNA] OF 964-1544 (ISOFORM B)</scope>
    <source>
        <strain evidence="10">Berkeley</strain>
        <tissue evidence="10">Embryo</tissue>
    </source>
</reference>
<reference evidence="8" key="5">
    <citation type="journal article" date="2013" name="Science">
        <title>A Tumor suppressor complex with GAP activity for the Rag GTPases that signal amino acid sufficiency to mTORC1.</title>
        <authorList>
            <person name="Bar-Peled L."/>
            <person name="Chantranupong L."/>
            <person name="Cherniack A.D."/>
            <person name="Chen W.W."/>
            <person name="Ottina K.A."/>
            <person name="Grabiner B.C."/>
            <person name="Spear E.D."/>
            <person name="Carter S.L."/>
            <person name="Meyerson M."/>
            <person name="Sabatini D.M."/>
        </authorList>
    </citation>
    <scope>FUNCTION</scope>
</reference>
<reference evidence="8" key="6">
    <citation type="journal article" date="2014" name="Proc. Natl. Acad. Sci. U.S.A.">
        <title>TORC1 regulators Iml1/GATOR1 and GATOR2 control meiotic entry and oocyte development in Drosophila.</title>
        <authorList>
            <person name="Wei Y."/>
            <person name="Reveal B."/>
            <person name="Reich J."/>
            <person name="Laursen W.J."/>
            <person name="Senger S."/>
            <person name="Akbar T."/>
            <person name="Iida-Jones T."/>
            <person name="Cai W."/>
            <person name="Jarnik M."/>
            <person name="Lilly M.A."/>
        </authorList>
    </citation>
    <scope>FUNCTION</scope>
    <scope>DISRUPTION PHENOTYPE</scope>
</reference>
<reference evidence="8" key="7">
    <citation type="journal article" date="2016" name="G3 (Bethesda)">
        <title>The GATOR1 Complex Regulates Metabolic Homeostasis and the Response to Nutrient Stress in Drosophila melanogaster.</title>
        <authorList>
            <person name="Wei Y."/>
            <person name="Reveal B."/>
            <person name="Cai W."/>
            <person name="Lilly M.A."/>
        </authorList>
    </citation>
    <scope>FUNCTION</scope>
    <scope>DISRUPTION PHENOTYPE</scope>
</reference>
<reference evidence="8" key="8">
    <citation type="journal article" date="2016" name="PLoS Genet.">
        <title>The GATOR2 component Wdr24 regulates TORC1 activity and lysosome function.</title>
        <authorList>
            <person name="Cai W."/>
            <person name="Wei Y."/>
            <person name="Jarnik M."/>
            <person name="Reich J."/>
            <person name="Lilly M.A."/>
        </authorList>
    </citation>
    <scope>IDENTIFICATION IN THE GATOR COMPLEX</scope>
</reference>
<feature type="chain" id="PRO_0000447024" description="GATOR complex protein Iml1">
    <location>
        <begin position="1"/>
        <end position="1544"/>
    </location>
</feature>
<feature type="region of interest" description="Disordered" evidence="1">
    <location>
        <begin position="615"/>
        <end position="649"/>
    </location>
</feature>
<feature type="region of interest" description="Disordered" evidence="1">
    <location>
        <begin position="1037"/>
        <end position="1072"/>
    </location>
</feature>
<feature type="compositionally biased region" description="Polar residues" evidence="1">
    <location>
        <begin position="623"/>
        <end position="639"/>
    </location>
</feature>
<feature type="compositionally biased region" description="Polar residues" evidence="1">
    <location>
        <begin position="1041"/>
        <end position="1057"/>
    </location>
</feature>
<feature type="compositionally biased region" description="Basic and acidic residues" evidence="1">
    <location>
        <begin position="1058"/>
        <end position="1072"/>
    </location>
</feature>
<feature type="splice variant" id="VSP_060140" description="In isoform B.">
    <location>
        <begin position="723"/>
        <end position="763"/>
    </location>
</feature>
<feature type="splice variant" id="VSP_060141" description="In isoform B.">
    <original>YLASLLQDSPIAHITKRRHSTSIISRPQPNQGLTNSPFRERVGSNRLPEKRP</original>
    <variation>QHDTPRITEKHHNQLNSPLQ</variation>
    <location>
        <begin position="1021"/>
        <end position="1072"/>
    </location>
</feature>
<feature type="sequence conflict" description="In Ref. 4; ADX35927." evidence="8" ref="4">
    <original>QH</original>
    <variation>H</variation>
    <location sequence="Q9W0E3-2">
        <begin position="980"/>
        <end position="981"/>
    </location>
</feature>
<organism evidence="12">
    <name type="scientific">Drosophila melanogaster</name>
    <name type="common">Fruit fly</name>
    <dbReference type="NCBI Taxonomy" id="7227"/>
    <lineage>
        <taxon>Eukaryota</taxon>
        <taxon>Metazoa</taxon>
        <taxon>Ecdysozoa</taxon>
        <taxon>Arthropoda</taxon>
        <taxon>Hexapoda</taxon>
        <taxon>Insecta</taxon>
        <taxon>Pterygota</taxon>
        <taxon>Neoptera</taxon>
        <taxon>Endopterygota</taxon>
        <taxon>Diptera</taxon>
        <taxon>Brachycera</taxon>
        <taxon>Muscomorpha</taxon>
        <taxon>Ephydroidea</taxon>
        <taxon>Drosophilidae</taxon>
        <taxon>Drosophila</taxon>
        <taxon>Sophophora</taxon>
    </lineage>
</organism>
<evidence type="ECO:0000256" key="1">
    <source>
        <dbReference type="SAM" id="MobiDB-lite"/>
    </source>
</evidence>
<evidence type="ECO:0000269" key="2">
    <source>
    </source>
</evidence>
<evidence type="ECO:0000269" key="3">
    <source>
    </source>
</evidence>
<evidence type="ECO:0000269" key="4">
    <source>
    </source>
</evidence>
<evidence type="ECO:0000269" key="5">
    <source>
    </source>
</evidence>
<evidence type="ECO:0000303" key="6">
    <source>
    </source>
</evidence>
<evidence type="ECO:0000303" key="7">
    <source>
    </source>
</evidence>
<evidence type="ECO:0000305" key="8"/>
<evidence type="ECO:0000312" key="9">
    <source>
        <dbReference type="EMBL" id="AAL68237.1"/>
    </source>
</evidence>
<evidence type="ECO:0000312" key="10">
    <source>
        <dbReference type="EMBL" id="ADX35927.1"/>
    </source>
</evidence>
<evidence type="ECO:0000312" key="11">
    <source>
        <dbReference type="FlyBase" id="FBgn0035227"/>
    </source>
</evidence>
<evidence type="ECO:0000312" key="12">
    <source>
        <dbReference type="Proteomes" id="UP000000803"/>
    </source>
</evidence>
<gene>
    <name evidence="7 11" type="primary">Iml1</name>
    <name evidence="6" type="synonym">DEPDC5</name>
    <name evidence="11" type="synonym">SEA1</name>
    <name evidence="11" type="ORF">CG12090</name>
</gene>
<name>IML1_DROME</name>
<keyword id="KW-0025">Alternative splicing</keyword>
<keyword id="KW-0131">Cell cycle</keyword>
<keyword id="KW-0132">Cell division</keyword>
<keyword id="KW-0469">Meiosis</keyword>
<keyword id="KW-0498">Mitosis</keyword>
<keyword id="KW-1185">Reference proteome</keyword>
<comment type="function">
    <text evidence="2 3 5">An essential component of the GATOR subcomplex GATOR1 which functions as an inhibitor of the amino acid-sensing branch of the TORC1 signaling pathway (PubMed:23723238, PubMed:25512509, PubMed:27672113). The two GATOR subcomplexes, GATOR1 and GATOR2, regulate the TORC1 pathway in order to mediate metabolic homeostasis, female gametogenesis and the response to amino acid limitation and complete starvation (PubMed:23723238, PubMed:25512509, PubMed:27672113). The function of GATOR1 in negatively regulating the TORC1 pathway is essential for maintaining baseline levels of TORC1 activity under nutrient rich conditions, and for promoting survival during amino acid or complete starvation by inhibiting TORC1-dependent cell growth and promoting catabolic metabolism and autophagy (PubMed:23723238, PubMed:25512509, PubMed:27672113). GATOR1 and GATOR2 act at different stages of oogenesis to regulate TORC1 in order to control meiotic entry and promote oocyte growth and development (PubMed:25512509, PubMed:27672113). After exactly four mitotic cyst divisions, the GATOR1 complex members (Iml1, Nprl2 and Nprl3) down-regulate TORC1 to slow cellular metabolism and promote the mitotic/meiotic transition (PubMed:25512509, PubMed:27672113). At later stages of oogenesis, the mio and Nup44A components of the GATOR2 complex inhibit GATOR1 and thus activate TORC1 to promote meiotic progression, and drive oocyte growth and development (PubMed:25512509, PubMed:27672113).</text>
</comment>
<comment type="subunit">
    <text evidence="4">Component of the GATOR complex consisting of mio, Nup44A/Seh1, Im11, Nplr3, Nplr2, Wdr24, Wdr59 and Sec13 (PubMed:27166823). Within the GATOR complex, probable component of the GATOR1 subcomplex which is likely composed of Iml1, Nplr2 and Nplr3 (PubMed:27166823).</text>
</comment>
<comment type="alternative products">
    <event type="alternative splicing"/>
    <isoform>
        <id>Q9W0E3-1</id>
        <name evidence="11">A</name>
        <sequence type="displayed"/>
    </isoform>
    <isoform>
        <id>Q9W0E3-2</id>
        <name evidence="11">B</name>
        <sequence type="described" ref="VSP_060140 VSP_060141"/>
    </isoform>
</comment>
<comment type="disruption phenotype">
    <text evidence="3 5">Pupal lethal (PubMed:27672113). Under nutrient-replete conditions, larvae display a significant increase in TORC1 activity, indicated by increased phosphorylation of S6K/p70S6K (PubMed:27672113). RNAi-mediated knockdown in the female germline results in a large percentage of ovarian cysts delaying mitotic exit (PubMed:25512509, PubMed:27672113). Instead, cysts undergo a fifth mitotic division before meiotic commitment to produce 32-cell cysts with a single oocyte (PubMed:25512509, PubMed:27672113). Double RNAi-mediated knockdown with GATOR1 complex member Nprl2 in the female germline increases the penetrance of ovarian cysts displaying delayed mitotic exit and producing 32-cell cysts (PubMed:25512509, PubMed:27672113). The number of ovarian cysts that delay meiotic commitment and undergo a fifth mitotic division are decreased when females are fed the mTORC1 complex inhibitor rapamycin (PubMed:25512509).</text>
</comment>
<comment type="similarity">
    <text evidence="8">Belongs to the IML1 family.</text>
</comment>
<comment type="sequence caution" evidence="8">
    <conflict type="erroneous initiation">
        <sequence resource="EMBL-CDS" id="AAL68237"/>
    </conflict>
    <text>Truncated N-terminus.</text>
</comment>
<sequence length="1544" mass="176732">MKLYKLNTHTRGCNKSYDADLVMNLKDHPNANVGDVVEIYAPDEENGTHLLLQITEFNGSCGRDVISIESGIANAFKMRPYSNVVMRIVKPADVALDSIEITFKDQYMGRSEMWRLKTYLTDTCVYVNKKIDYNDMQIRCQVYEMWSQGERVASGVITEDTKIVFRSSTSMVYLFLQMSSEMWDFDIHGDLYFEKAVNGFLTELFQKWRKLSCNHEVTIVLFSRTFYAAKSLDEFPEHMRDCLQQDYKGRFYEDFYRVAIQNERCDDWCTVLGQLRKLFTSYQATVLRYHERENMKIPPATNSSATQGNFLEVLNISLNTFEKHYLDRTFDRTGQLSVVITPGVGVFSVDRELTNITKQRIIDNGVGSDLVCVGEQPLHAVPLLKFHNKDTTLTSADDYSLPHWINLSFYSTNKKIVYSSFIPRIKLPLFGSQLTLHDGVGDGEGEENERHFLSCNQSEYKHNSLFDYDAYDEQIFQPLPAQSTCSLQRVVRAKKTSVPSLETYAYRNNDWENLTPTQIPAMRRKMSDPDIHHGTSAMLAALQPDTTNLSESLASEKNSRRTIVSIAPIVRPGRALINPFDPSQVTIKLTSNRRRWTHIFPKGPTGVLIQQHHYQAVPAKPTQAGQQRPLQQTQSNNNNDQEDYGCENGEQYDRVSSHSLLNKSDSSQSFVMGDEPIDFFKRRQNSPMNPQPANVPNLTATQAKSYLWGATGEQEWTPAITTVKHLRPIVEGEHHHLGSLEALRALDPPPDAEAGGGRGKIIIGVDWKSLTIPACLPITTDYFPDKRSLNNDYVISDYTLLPDDVNHDYAQSRAVYRKPLSTEEVCKEIVSQRLAQGFQLIVVDEKPPTASGCSSGSAVQPVKLSRETNKEYLLSIGRIFHKISLSGSVITVTGYRPRHPYPPINVDYRYRFHAPQHETYEISGVNFTTEKLENFNWNHMDLYICTRGDVDYPLMESLKYWRYRMYLLPRENIVSKIASCQRCDIFPDVTADNTREQVEDFVRLIEAVSKLKRQYARKARYLASLLQDSPIAHITKRRHSTSIISRPQPNQGLTNSPFRERVGSNRLPEKRPSINVRPKLENGRIPRIFPATDAAAAAGVAARDDQDDGFPVDIKFSPNATLPEIFEAMKHPVNGVGFFSQTQSLPSCTFVSYDALMWLKTRLNNGRHPLDLLEAMRKERMICHASGDWKKPVVPGFVFYYVVQQDKNAKDYAPPLDDYSAFVNEWLEIEFQGCSFLWHDEPVTTPVPNFLRDSPAPQSWTETSSNKRVYRQSHLEIDVNQKSDRMEWGHVKHHTVLQPRFAFEIVVEWVTSSGPIVADLIGGWMRKANQFNFLVSVPADPMAEPFTKKSDPLRGPIFIPLCTTFLPNGAALFDEFPEESRSDRMLFFQEAILGKFGFLPCVLEKKYSVGKDLPKEYQYVHCTGNMFALIRCATNNYQVESPILKEANVTRCVYGHTNNTNVPKKVGFLWAWNHMIPNKKWKAQTINNSADGELFQLKMLKDFREFCSNSDQRLSTFWTQSQELKRRAQKFEFNNNNTEENKMK</sequence>
<protein>
    <recommendedName>
        <fullName evidence="7">GATOR complex protein Iml1</fullName>
    </recommendedName>
    <alternativeName>
        <fullName evidence="7">Increased minichromosome loss 1</fullName>
    </alternativeName>
</protein>